<comment type="function">
    <text evidence="1">Catalyzes the synthesis of GMP from XMP.</text>
</comment>
<comment type="catalytic activity">
    <reaction evidence="1">
        <text>XMP + L-glutamine + ATP + H2O = GMP + L-glutamate + AMP + diphosphate + 2 H(+)</text>
        <dbReference type="Rhea" id="RHEA:11680"/>
        <dbReference type="ChEBI" id="CHEBI:15377"/>
        <dbReference type="ChEBI" id="CHEBI:15378"/>
        <dbReference type="ChEBI" id="CHEBI:29985"/>
        <dbReference type="ChEBI" id="CHEBI:30616"/>
        <dbReference type="ChEBI" id="CHEBI:33019"/>
        <dbReference type="ChEBI" id="CHEBI:57464"/>
        <dbReference type="ChEBI" id="CHEBI:58115"/>
        <dbReference type="ChEBI" id="CHEBI:58359"/>
        <dbReference type="ChEBI" id="CHEBI:456215"/>
        <dbReference type="EC" id="6.3.5.2"/>
    </reaction>
</comment>
<comment type="pathway">
    <text evidence="1">Purine metabolism; GMP biosynthesis; GMP from XMP (L-Gln route): step 1/1.</text>
</comment>
<comment type="subunit">
    <text evidence="1">Homodimer.</text>
</comment>
<accession>Q62JF6</accession>
<proteinExistence type="inferred from homology"/>
<gene>
    <name evidence="1" type="primary">guaA</name>
    <name type="ordered locus">BMA1522</name>
</gene>
<sequence length="539" mass="59422">MHDKILILDFGSQVTQLIARRVREAHVYCEIHPNDVSDDFVREFAPKGVILSGSHASTYEDHQLRAPQAVWDLGVPVLGICYGMQTMAVQLGGKVEWSDHREFGYAEVRAHGRTRLLDGIQDFATPEGHGMLKVWMSHGDKVGEMPPGFALMASTPSCPIAGMADEARGYYAVQFHPEVTHTVQGRKLLERFVLDIAGAKPDWIMRDHIEEAVARIREQVGDEEVILGLSGGVDSSVAAALIHRAIGDQLTCVFVDHGLLRLNEGKMVLDMFEGRLHAKVVHVDASEQFLGHLAGVADPEHKRKIIGREFVEVFQAEAKKLTNAKWLAQGTIYPDVIESGGAKTKKATTIKSHHNVGGLPETLGLKLLEPLRDLFKDEVRELGVALGLPAEMVYRHPFPGPGLGVRILGEVKRDYAELLRRADAIFIEELRGTLATEQDAAAGLCEPSQVGKSWYDLTSQAFAVFLPVKSVGVMGDGRTYDYVAALRAVQTTDFMTAHWAHLPYALLGRASNRIINEVRGINRVVYDVSGKPPATIEWE</sequence>
<protein>
    <recommendedName>
        <fullName evidence="1">GMP synthase [glutamine-hydrolyzing]</fullName>
        <ecNumber evidence="1">6.3.5.2</ecNumber>
    </recommendedName>
    <alternativeName>
        <fullName evidence="1">GMP synthetase</fullName>
    </alternativeName>
    <alternativeName>
        <fullName evidence="1">Glutamine amidotransferase</fullName>
    </alternativeName>
</protein>
<name>GUAA_BURMA</name>
<evidence type="ECO:0000255" key="1">
    <source>
        <dbReference type="HAMAP-Rule" id="MF_00344"/>
    </source>
</evidence>
<keyword id="KW-0067">ATP-binding</keyword>
<keyword id="KW-0315">Glutamine amidotransferase</keyword>
<keyword id="KW-0332">GMP biosynthesis</keyword>
<keyword id="KW-0436">Ligase</keyword>
<keyword id="KW-0547">Nucleotide-binding</keyword>
<keyword id="KW-0658">Purine biosynthesis</keyword>
<keyword id="KW-1185">Reference proteome</keyword>
<feature type="chain" id="PRO_0000229411" description="GMP synthase [glutamine-hydrolyzing]">
    <location>
        <begin position="1"/>
        <end position="539"/>
    </location>
</feature>
<feature type="domain" description="Glutamine amidotransferase type-1" evidence="1">
    <location>
        <begin position="4"/>
        <end position="202"/>
    </location>
</feature>
<feature type="domain" description="GMPS ATP-PPase" evidence="1">
    <location>
        <begin position="203"/>
        <end position="395"/>
    </location>
</feature>
<feature type="active site" description="Nucleophile" evidence="1">
    <location>
        <position position="81"/>
    </location>
</feature>
<feature type="active site" evidence="1">
    <location>
        <position position="176"/>
    </location>
</feature>
<feature type="active site" evidence="1">
    <location>
        <position position="178"/>
    </location>
</feature>
<feature type="binding site" evidence="1">
    <location>
        <begin position="230"/>
        <end position="236"/>
    </location>
    <ligand>
        <name>ATP</name>
        <dbReference type="ChEBI" id="CHEBI:30616"/>
    </ligand>
</feature>
<organism>
    <name type="scientific">Burkholderia mallei (strain ATCC 23344)</name>
    <dbReference type="NCBI Taxonomy" id="243160"/>
    <lineage>
        <taxon>Bacteria</taxon>
        <taxon>Pseudomonadati</taxon>
        <taxon>Pseudomonadota</taxon>
        <taxon>Betaproteobacteria</taxon>
        <taxon>Burkholderiales</taxon>
        <taxon>Burkholderiaceae</taxon>
        <taxon>Burkholderia</taxon>
        <taxon>pseudomallei group</taxon>
    </lineage>
</organism>
<reference key="1">
    <citation type="journal article" date="2004" name="Proc. Natl. Acad. Sci. U.S.A.">
        <title>Structural flexibility in the Burkholderia mallei genome.</title>
        <authorList>
            <person name="Nierman W.C."/>
            <person name="DeShazer D."/>
            <person name="Kim H.S."/>
            <person name="Tettelin H."/>
            <person name="Nelson K.E."/>
            <person name="Feldblyum T.V."/>
            <person name="Ulrich R.L."/>
            <person name="Ronning C.M."/>
            <person name="Brinkac L.M."/>
            <person name="Daugherty S.C."/>
            <person name="Davidsen T.D."/>
            <person name="DeBoy R.T."/>
            <person name="Dimitrov G."/>
            <person name="Dodson R.J."/>
            <person name="Durkin A.S."/>
            <person name="Gwinn M.L."/>
            <person name="Haft D.H."/>
            <person name="Khouri H.M."/>
            <person name="Kolonay J.F."/>
            <person name="Madupu R."/>
            <person name="Mohammoud Y."/>
            <person name="Nelson W.C."/>
            <person name="Radune D."/>
            <person name="Romero C.M."/>
            <person name="Sarria S."/>
            <person name="Selengut J."/>
            <person name="Shamblin C."/>
            <person name="Sullivan S.A."/>
            <person name="White O."/>
            <person name="Yu Y."/>
            <person name="Zafar N."/>
            <person name="Zhou L."/>
            <person name="Fraser C.M."/>
        </authorList>
    </citation>
    <scope>NUCLEOTIDE SEQUENCE [LARGE SCALE GENOMIC DNA]</scope>
    <source>
        <strain>ATCC 23344</strain>
    </source>
</reference>
<dbReference type="EC" id="6.3.5.2" evidence="1"/>
<dbReference type="EMBL" id="CP000010">
    <property type="protein sequence ID" value="AAU47724.1"/>
    <property type="molecule type" value="Genomic_DNA"/>
</dbReference>
<dbReference type="RefSeq" id="WP_004193192.1">
    <property type="nucleotide sequence ID" value="NC_006348.1"/>
</dbReference>
<dbReference type="RefSeq" id="YP_103163.1">
    <property type="nucleotide sequence ID" value="NC_006348.1"/>
</dbReference>
<dbReference type="SMR" id="Q62JF6"/>
<dbReference type="MEROPS" id="C26.957"/>
<dbReference type="GeneID" id="93060667"/>
<dbReference type="KEGG" id="bma:BMA1522"/>
<dbReference type="PATRIC" id="fig|243160.12.peg.1564"/>
<dbReference type="eggNOG" id="COG0518">
    <property type="taxonomic scope" value="Bacteria"/>
</dbReference>
<dbReference type="eggNOG" id="COG0519">
    <property type="taxonomic scope" value="Bacteria"/>
</dbReference>
<dbReference type="HOGENOM" id="CLU_014340_0_5_4"/>
<dbReference type="UniPathway" id="UPA00189">
    <property type="reaction ID" value="UER00296"/>
</dbReference>
<dbReference type="Proteomes" id="UP000006693">
    <property type="component" value="Chromosome 1"/>
</dbReference>
<dbReference type="GO" id="GO:0005829">
    <property type="term" value="C:cytosol"/>
    <property type="evidence" value="ECO:0007669"/>
    <property type="project" value="TreeGrafter"/>
</dbReference>
<dbReference type="GO" id="GO:0005524">
    <property type="term" value="F:ATP binding"/>
    <property type="evidence" value="ECO:0007669"/>
    <property type="project" value="UniProtKB-UniRule"/>
</dbReference>
<dbReference type="GO" id="GO:0003921">
    <property type="term" value="F:GMP synthase activity"/>
    <property type="evidence" value="ECO:0007669"/>
    <property type="project" value="InterPro"/>
</dbReference>
<dbReference type="CDD" id="cd01742">
    <property type="entry name" value="GATase1_GMP_Synthase"/>
    <property type="match status" value="1"/>
</dbReference>
<dbReference type="CDD" id="cd01997">
    <property type="entry name" value="GMP_synthase_C"/>
    <property type="match status" value="1"/>
</dbReference>
<dbReference type="FunFam" id="3.30.300.10:FF:000002">
    <property type="entry name" value="GMP synthase [glutamine-hydrolyzing]"/>
    <property type="match status" value="1"/>
</dbReference>
<dbReference type="FunFam" id="3.40.50.620:FF:000001">
    <property type="entry name" value="GMP synthase [glutamine-hydrolyzing]"/>
    <property type="match status" value="1"/>
</dbReference>
<dbReference type="FunFam" id="3.40.50.880:FF:000001">
    <property type="entry name" value="GMP synthase [glutamine-hydrolyzing]"/>
    <property type="match status" value="1"/>
</dbReference>
<dbReference type="Gene3D" id="3.30.300.10">
    <property type="match status" value="1"/>
</dbReference>
<dbReference type="Gene3D" id="3.40.50.880">
    <property type="match status" value="1"/>
</dbReference>
<dbReference type="Gene3D" id="3.40.50.620">
    <property type="entry name" value="HUPs"/>
    <property type="match status" value="1"/>
</dbReference>
<dbReference type="HAMAP" id="MF_00344">
    <property type="entry name" value="GMP_synthase"/>
    <property type="match status" value="1"/>
</dbReference>
<dbReference type="InterPro" id="IPR029062">
    <property type="entry name" value="Class_I_gatase-like"/>
</dbReference>
<dbReference type="InterPro" id="IPR017926">
    <property type="entry name" value="GATASE"/>
</dbReference>
<dbReference type="InterPro" id="IPR001674">
    <property type="entry name" value="GMP_synth_C"/>
</dbReference>
<dbReference type="InterPro" id="IPR004739">
    <property type="entry name" value="GMP_synth_GATase"/>
</dbReference>
<dbReference type="InterPro" id="IPR022955">
    <property type="entry name" value="GMP_synthase"/>
</dbReference>
<dbReference type="InterPro" id="IPR025777">
    <property type="entry name" value="GMPS_ATP_PPase_dom"/>
</dbReference>
<dbReference type="InterPro" id="IPR022310">
    <property type="entry name" value="NAD/GMP_synthase"/>
</dbReference>
<dbReference type="InterPro" id="IPR014729">
    <property type="entry name" value="Rossmann-like_a/b/a_fold"/>
</dbReference>
<dbReference type="NCBIfam" id="TIGR00884">
    <property type="entry name" value="guaA_Cterm"/>
    <property type="match status" value="1"/>
</dbReference>
<dbReference type="NCBIfam" id="TIGR00888">
    <property type="entry name" value="guaA_Nterm"/>
    <property type="match status" value="1"/>
</dbReference>
<dbReference type="NCBIfam" id="NF000848">
    <property type="entry name" value="PRK00074.1"/>
    <property type="match status" value="1"/>
</dbReference>
<dbReference type="PANTHER" id="PTHR11922:SF2">
    <property type="entry name" value="GMP SYNTHASE [GLUTAMINE-HYDROLYZING]"/>
    <property type="match status" value="1"/>
</dbReference>
<dbReference type="PANTHER" id="PTHR11922">
    <property type="entry name" value="GMP SYNTHASE-RELATED"/>
    <property type="match status" value="1"/>
</dbReference>
<dbReference type="Pfam" id="PF00117">
    <property type="entry name" value="GATase"/>
    <property type="match status" value="1"/>
</dbReference>
<dbReference type="Pfam" id="PF00958">
    <property type="entry name" value="GMP_synt_C"/>
    <property type="match status" value="1"/>
</dbReference>
<dbReference type="Pfam" id="PF02540">
    <property type="entry name" value="NAD_synthase"/>
    <property type="match status" value="1"/>
</dbReference>
<dbReference type="SUPFAM" id="SSF52402">
    <property type="entry name" value="Adenine nucleotide alpha hydrolases-like"/>
    <property type="match status" value="1"/>
</dbReference>
<dbReference type="SUPFAM" id="SSF52317">
    <property type="entry name" value="Class I glutamine amidotransferase-like"/>
    <property type="match status" value="1"/>
</dbReference>
<dbReference type="SUPFAM" id="SSF54810">
    <property type="entry name" value="GMP synthetase C-terminal dimerisation domain"/>
    <property type="match status" value="1"/>
</dbReference>
<dbReference type="PROSITE" id="PS51273">
    <property type="entry name" value="GATASE_TYPE_1"/>
    <property type="match status" value="1"/>
</dbReference>
<dbReference type="PROSITE" id="PS51553">
    <property type="entry name" value="GMPS_ATP_PPASE"/>
    <property type="match status" value="1"/>
</dbReference>